<comment type="similarity">
    <text evidence="1 2">Belongs to the jacalin lectin family.</text>
</comment>
<feature type="chain" id="PRO_0000430402" description="Jacalin-related lectin 45">
    <location>
        <begin position="1"/>
        <end position="396"/>
    </location>
</feature>
<feature type="domain" description="Jacalin-type lectin 1" evidence="1">
    <location>
        <begin position="3"/>
        <end position="138"/>
    </location>
</feature>
<feature type="domain" description="Jacalin-type lectin 2" evidence="1">
    <location>
        <begin position="144"/>
        <end position="264"/>
    </location>
</feature>
<feature type="domain" description="Jacalin-type lectin 3" evidence="1">
    <location>
        <begin position="270"/>
        <end position="392"/>
    </location>
</feature>
<reference key="1">
    <citation type="journal article" date="1997" name="DNA Res.">
        <title>Structural analysis of Arabidopsis thaliana chromosome 5. II. Sequence features of the regions of 1,044,062 bp covered by thirteen physically assigned P1 clones.</title>
        <authorList>
            <person name="Kotani H."/>
            <person name="Nakamura Y."/>
            <person name="Sato S."/>
            <person name="Kaneko T."/>
            <person name="Asamizu E."/>
            <person name="Miyajima N."/>
            <person name="Tabata S."/>
        </authorList>
    </citation>
    <scope>NUCLEOTIDE SEQUENCE [LARGE SCALE GENOMIC DNA]</scope>
    <source>
        <strain>cv. Columbia</strain>
    </source>
</reference>
<reference key="2">
    <citation type="journal article" date="2017" name="Plant J.">
        <title>Araport11: a complete reannotation of the Arabidopsis thaliana reference genome.</title>
        <authorList>
            <person name="Cheng C.Y."/>
            <person name="Krishnakumar V."/>
            <person name="Chan A.P."/>
            <person name="Thibaud-Nissen F."/>
            <person name="Schobel S."/>
            <person name="Town C.D."/>
        </authorList>
    </citation>
    <scope>GENOME REANNOTATION</scope>
    <source>
        <strain>cv. Columbia</strain>
    </source>
</reference>
<reference key="3">
    <citation type="journal article" date="2008" name="Plant Cell Physiol.">
        <title>Antagonistic jacalin-related lectins regulate the size of ER body-type beta-glucosidase complexes in Arabidopsis thaliana.</title>
        <authorList>
            <person name="Nagano A.J."/>
            <person name="Fukao Y."/>
            <person name="Fujiwara M."/>
            <person name="Nishimura M."/>
            <person name="Hara-Nishimura I."/>
        </authorList>
    </citation>
    <scope>GENE FAMILY</scope>
    <scope>NOMENCLATURE</scope>
</reference>
<sequence>MSKKVTIAYGGSNGNKFDDGVYEGTYDGVRKLIVGEDFHGIVYLKIQYVKNGDVVVKEHGRARGTHITETEFEVKCPDEYITSIWGTCRNDHHRYKSTGGRTFEQLTAADKYDINLAAKMGTPMYWNTVSELQFKTSHGRTSEQFRMPGTGGSNGVSWDDGAYDRLSKLCVGEDAHCVSSVEFHYVKGNDRITHCHGKDSKEHDKDGFISSLTFKTSMNRSSEKFGKPVGTKFQLEAKGFDKIVGFRGRSSVNRINALGANFAVVVVPPVKKLNAKGGVLGNEWDDGIHDDARMITFKLYFNKEYITSVEGHYGKRLAAPNASASAMSSFFTGYMTMLKFNTNRTTYQVLSHSPEYTYEGTSFKLEEKDHKIVGFYGKTEVSLNQIGVYVKPIANA</sequence>
<accession>Q9FNM2</accession>
<keyword id="KW-0430">Lectin</keyword>
<keyword id="KW-1185">Reference proteome</keyword>
<keyword id="KW-0677">Repeat</keyword>
<dbReference type="EMBL" id="AB006698">
    <property type="protein sequence ID" value="BAB08245.1"/>
    <property type="molecule type" value="Genomic_DNA"/>
</dbReference>
<dbReference type="EMBL" id="CP002688">
    <property type="protein sequence ID" value="AED95325.1"/>
    <property type="molecule type" value="Genomic_DNA"/>
</dbReference>
<dbReference type="RefSeq" id="NP_199412.1">
    <property type="nucleotide sequence ID" value="NM_123968.2"/>
</dbReference>
<dbReference type="SMR" id="Q9FNM2"/>
<dbReference type="FunCoup" id="Q9FNM2">
    <property type="interactions" value="1"/>
</dbReference>
<dbReference type="PaxDb" id="3702-AT5G46000.1"/>
<dbReference type="EnsemblPlants" id="AT5G46000.1">
    <property type="protein sequence ID" value="AT5G46000.1"/>
    <property type="gene ID" value="AT5G46000"/>
</dbReference>
<dbReference type="GeneID" id="834640"/>
<dbReference type="Gramene" id="AT5G46000.1">
    <property type="protein sequence ID" value="AT5G46000.1"/>
    <property type="gene ID" value="AT5G46000"/>
</dbReference>
<dbReference type="KEGG" id="ath:AT5G46000"/>
<dbReference type="Araport" id="AT5G46000"/>
<dbReference type="TAIR" id="AT5G46000"/>
<dbReference type="eggNOG" id="ENOG502SCUZ">
    <property type="taxonomic scope" value="Eukaryota"/>
</dbReference>
<dbReference type="HOGENOM" id="CLU_041730_0_0_1"/>
<dbReference type="InParanoid" id="Q9FNM2"/>
<dbReference type="OMA" id="HITETEF"/>
<dbReference type="PhylomeDB" id="Q9FNM2"/>
<dbReference type="PRO" id="PR:Q9FNM2"/>
<dbReference type="Proteomes" id="UP000006548">
    <property type="component" value="Chromosome 5"/>
</dbReference>
<dbReference type="ExpressionAtlas" id="Q9FNM2">
    <property type="expression patterns" value="baseline and differential"/>
</dbReference>
<dbReference type="GO" id="GO:0030246">
    <property type="term" value="F:carbohydrate binding"/>
    <property type="evidence" value="ECO:0007669"/>
    <property type="project" value="UniProtKB-KW"/>
</dbReference>
<dbReference type="Gene3D" id="2.100.10.30">
    <property type="entry name" value="Jacalin-like lectin domain"/>
    <property type="match status" value="3"/>
</dbReference>
<dbReference type="InterPro" id="IPR001229">
    <property type="entry name" value="Jacalin-like_lectin_dom"/>
</dbReference>
<dbReference type="InterPro" id="IPR036404">
    <property type="entry name" value="Jacalin-like_lectin_dom_sf"/>
</dbReference>
<dbReference type="PANTHER" id="PTHR47293">
    <property type="entry name" value="JACALIN-RELATED LECTIN 3"/>
    <property type="match status" value="1"/>
</dbReference>
<dbReference type="PANTHER" id="PTHR47293:SF13">
    <property type="entry name" value="JACALIN-RELATED LECTIN 45"/>
    <property type="match status" value="1"/>
</dbReference>
<dbReference type="Pfam" id="PF01419">
    <property type="entry name" value="Jacalin"/>
    <property type="match status" value="3"/>
</dbReference>
<dbReference type="SMART" id="SM00915">
    <property type="entry name" value="Jacalin"/>
    <property type="match status" value="3"/>
</dbReference>
<dbReference type="SUPFAM" id="SSF51101">
    <property type="entry name" value="Mannose-binding lectins"/>
    <property type="match status" value="3"/>
</dbReference>
<dbReference type="PROSITE" id="PS51752">
    <property type="entry name" value="JACALIN_LECTIN"/>
    <property type="match status" value="3"/>
</dbReference>
<protein>
    <recommendedName>
        <fullName>Jacalin-related lectin 45</fullName>
    </recommendedName>
</protein>
<gene>
    <name type="primary">JAL45</name>
    <name type="ordered locus">At5g46000</name>
    <name type="ORF">MCL19.4</name>
</gene>
<name>JAL45_ARATH</name>
<evidence type="ECO:0000255" key="1">
    <source>
        <dbReference type="PROSITE-ProRule" id="PRU01088"/>
    </source>
</evidence>
<evidence type="ECO:0000305" key="2"/>
<organism>
    <name type="scientific">Arabidopsis thaliana</name>
    <name type="common">Mouse-ear cress</name>
    <dbReference type="NCBI Taxonomy" id="3702"/>
    <lineage>
        <taxon>Eukaryota</taxon>
        <taxon>Viridiplantae</taxon>
        <taxon>Streptophyta</taxon>
        <taxon>Embryophyta</taxon>
        <taxon>Tracheophyta</taxon>
        <taxon>Spermatophyta</taxon>
        <taxon>Magnoliopsida</taxon>
        <taxon>eudicotyledons</taxon>
        <taxon>Gunneridae</taxon>
        <taxon>Pentapetalae</taxon>
        <taxon>rosids</taxon>
        <taxon>malvids</taxon>
        <taxon>Brassicales</taxon>
        <taxon>Brassicaceae</taxon>
        <taxon>Camelineae</taxon>
        <taxon>Arabidopsis</taxon>
    </lineage>
</organism>
<proteinExistence type="inferred from homology"/>